<keyword id="KW-0002">3D-structure</keyword>
<keyword id="KW-0547">Nucleotide-binding</keyword>
<keyword id="KW-0548">Nucleotidyltransferase</keyword>
<keyword id="KW-1185">Reference proteome</keyword>
<keyword id="KW-0696">RNA-directed RNA polymerase</keyword>
<keyword id="KW-0808">Transferase</keyword>
<keyword id="KW-0693">Viral RNA replication</keyword>
<name>RDRP_THOGV</name>
<comment type="function">
    <text evidence="1">RNA-dependent RNA polymerase which is responsible for replication and transcription of virus RNA segments. The transcription of viral mRNAs occurs by a unique mechanism called cap-snatching. 5' methylated caps of cellular mRNAs are cleaved after 10-13 nucleotides by PA. In turn, these short capped RNAs are used as primers by PB1 for transcription of viral mRNAs. During virus replication, PB1 initiates RNA synthesis and copy vRNA into complementary RNA (cRNA) which in turn serves as a template for the production of more vRNAs.</text>
</comment>
<comment type="catalytic activity">
    <reaction evidence="2">
        <text>RNA(n) + a ribonucleoside 5'-triphosphate = RNA(n+1) + diphosphate</text>
        <dbReference type="Rhea" id="RHEA:21248"/>
        <dbReference type="Rhea" id="RHEA-COMP:14527"/>
        <dbReference type="Rhea" id="RHEA-COMP:17342"/>
        <dbReference type="ChEBI" id="CHEBI:33019"/>
        <dbReference type="ChEBI" id="CHEBI:61557"/>
        <dbReference type="ChEBI" id="CHEBI:140395"/>
        <dbReference type="EC" id="2.7.7.48"/>
    </reaction>
</comment>
<comment type="subunit">
    <text evidence="1">RNA polymerase is composed of three subunits: PA, PB1 and PB2.</text>
</comment>
<comment type="similarity">
    <text evidence="3">Belongs to the influenza viruses polymerase PB1 family.</text>
</comment>
<sequence>MNLFTPRSEINPTTTQELLYAYTGPAPVAYGTRTRAVLENIIRPYQYFYKEPNVQRALDIKTGCKEPEDINVEGPSSGFHTASVLKLADNFFRKYRPAMEKLKYWILVKLPKLKYAELSKGRQTYSFIHKRNLPAPIALEETVEFLEQNLRRKIGPTLLSYCQAIADVMELDETTYEGARDPRPWDIQLEEIDSDEEDPLFRQVGREETYTIKFSREELWDQMRTLNTMCKHLERGRLNRRTIATPSMLIRGFVKIVEDAAKEILENVPTSGVPVGGEEKLAKLASKQTFHTAVTGELSGDQEKFNECLDPDAMRLMWTVFLRKLGCPDWIMELFNIPFMVFKSKLADMGEGLVYTKGKLTDRKPLGEMPSEFDDLVRNVVGNSISCRLGMFMGMYNLTSTLLALISIEREELTGSHVESSDDFIHFFNCKTHEEMFKQAETLRLTLKLVGINMSPSKCILISPAGIGEFNSKFHHRDFVGNVATELPALVPNGTNPMTDLAMGLNVIKHSVNTGQMNLCTGALAMRIFNHAYKYAYMALGVTRRTRFMEENAITPLLTNQGASPVHSFSTMHLDEVALRRHLGLLDEETLRRILNPNNPVTQKGDPSMFFRIENKMPQIMEDYSVPSCFKYTLSRNRTIQDKPHKALLNKEERYQRVTSIINKLFPEVLIQEASAPGTVRESLKRRLELVVERSDLDEERKKRILSRIF</sequence>
<proteinExistence type="evidence at protein level"/>
<accession>O41353</accession>
<evidence type="ECO:0000250" key="1">
    <source>
        <dbReference type="UniProtKB" id="P03431"/>
    </source>
</evidence>
<evidence type="ECO:0000255" key="2">
    <source>
        <dbReference type="PROSITE-ProRule" id="PRU00539"/>
    </source>
</evidence>
<evidence type="ECO:0000305" key="3"/>
<evidence type="ECO:0007829" key="4">
    <source>
        <dbReference type="PDB" id="8Z85"/>
    </source>
</evidence>
<evidence type="ECO:0007829" key="5">
    <source>
        <dbReference type="PDB" id="8Z8N"/>
    </source>
</evidence>
<evidence type="ECO:0007829" key="6">
    <source>
        <dbReference type="PDB" id="8Z90"/>
    </source>
</evidence>
<evidence type="ECO:0007829" key="7">
    <source>
        <dbReference type="PDB" id="8Z97"/>
    </source>
</evidence>
<evidence type="ECO:0007829" key="8">
    <source>
        <dbReference type="PDB" id="8Z9Q"/>
    </source>
</evidence>
<evidence type="ECO:0007829" key="9">
    <source>
        <dbReference type="PDB" id="8Z9R"/>
    </source>
</evidence>
<organismHost>
    <name type="scientific">Amblyomma variegatum</name>
    <name type="common">Tropical bont tick</name>
    <dbReference type="NCBI Taxonomy" id="34610"/>
</organismHost>
<organismHost>
    <name type="scientific">Cavia cutleri</name>
    <name type="common">Guinea pig</name>
    <dbReference type="NCBI Taxonomy" id="10144"/>
</organismHost>
<organismHost>
    <name type="scientific">Mungos mungo</name>
    <name type="common">Banded mongoose</name>
    <dbReference type="NCBI Taxonomy" id="210652"/>
</organismHost>
<organismHost>
    <name type="scientific">Rhipicephalus appendiculatus</name>
    <name type="common">Brown ear tick</name>
    <dbReference type="NCBI Taxonomy" id="34631"/>
</organismHost>
<organismHost>
    <name type="scientific">Rhipicephalus microplus</name>
    <name type="common">Cattle tick</name>
    <name type="synonym">Boophilus microplus</name>
    <dbReference type="NCBI Taxonomy" id="6941"/>
</organismHost>
<gene>
    <name type="ordered locus">Segment 2</name>
</gene>
<protein>
    <recommendedName>
        <fullName>RNA-directed RNA polymerase catalytic subunit</fullName>
        <ecNumber>2.7.7.48</ecNumber>
    </recommendedName>
    <alternativeName>
        <fullName>RNA-directed RNA polymerase subunit P2</fullName>
    </alternativeName>
</protein>
<feature type="chain" id="PRO_0000078778" description="RNA-directed RNA polymerase catalytic subunit">
    <location>
        <begin position="1"/>
        <end position="710"/>
    </location>
</feature>
<feature type="domain" description="RdRp catalytic" evidence="2">
    <location>
        <begin position="285"/>
        <end position="460"/>
    </location>
</feature>
<feature type="helix" evidence="4">
    <location>
        <begin position="2"/>
        <end position="4"/>
    </location>
</feature>
<feature type="strand" evidence="4">
    <location>
        <begin position="8"/>
        <end position="10"/>
    </location>
</feature>
<feature type="helix" evidence="4">
    <location>
        <begin position="14"/>
        <end position="19"/>
    </location>
</feature>
<feature type="strand" evidence="8">
    <location>
        <begin position="22"/>
        <end position="24"/>
    </location>
</feature>
<feature type="helix" evidence="4">
    <location>
        <begin position="34"/>
        <end position="46"/>
    </location>
</feature>
<feature type="strand" evidence="4">
    <location>
        <begin position="47"/>
        <end position="51"/>
    </location>
</feature>
<feature type="helix" evidence="4">
    <location>
        <begin position="54"/>
        <end position="57"/>
    </location>
</feature>
<feature type="helix" evidence="4">
    <location>
        <begin position="67"/>
        <end position="69"/>
    </location>
</feature>
<feature type="strand" evidence="4">
    <location>
        <begin position="72"/>
        <end position="74"/>
    </location>
</feature>
<feature type="helix" evidence="4">
    <location>
        <begin position="81"/>
        <end position="93"/>
    </location>
</feature>
<feature type="helix" evidence="4">
    <location>
        <begin position="96"/>
        <end position="107"/>
    </location>
</feature>
<feature type="helix" evidence="4">
    <location>
        <begin position="109"/>
        <end position="112"/>
    </location>
</feature>
<feature type="helix" evidence="4">
    <location>
        <begin position="115"/>
        <end position="120"/>
    </location>
</feature>
<feature type="strand" evidence="8">
    <location>
        <begin position="124"/>
        <end position="126"/>
    </location>
</feature>
<feature type="turn" evidence="4">
    <location>
        <begin position="127"/>
        <end position="129"/>
    </location>
</feature>
<feature type="strand" evidence="4">
    <location>
        <begin position="130"/>
        <end position="133"/>
    </location>
</feature>
<feature type="helix" evidence="4">
    <location>
        <begin position="135"/>
        <end position="150"/>
    </location>
</feature>
<feature type="helix" evidence="4">
    <location>
        <begin position="158"/>
        <end position="168"/>
    </location>
</feature>
<feature type="strand" evidence="4">
    <location>
        <begin position="171"/>
        <end position="175"/>
    </location>
</feature>
<feature type="strand" evidence="6">
    <location>
        <begin position="178"/>
        <end position="180"/>
    </location>
</feature>
<feature type="strand" evidence="6">
    <location>
        <begin position="188"/>
        <end position="191"/>
    </location>
</feature>
<feature type="strand" evidence="6">
    <location>
        <begin position="196"/>
        <end position="198"/>
    </location>
</feature>
<feature type="strand" evidence="6">
    <location>
        <begin position="201"/>
        <end position="204"/>
    </location>
</feature>
<feature type="strand" evidence="6">
    <location>
        <begin position="208"/>
        <end position="210"/>
    </location>
</feature>
<feature type="strand" evidence="4">
    <location>
        <begin position="213"/>
        <end position="215"/>
    </location>
</feature>
<feature type="helix" evidence="4">
    <location>
        <begin position="216"/>
        <end position="224"/>
    </location>
</feature>
<feature type="strand" evidence="4">
    <location>
        <begin position="225"/>
        <end position="230"/>
    </location>
</feature>
<feature type="strand" evidence="4">
    <location>
        <begin position="242"/>
        <end position="245"/>
    </location>
</feature>
<feature type="helix" evidence="4">
    <location>
        <begin position="248"/>
        <end position="265"/>
    </location>
</feature>
<feature type="strand" evidence="4">
    <location>
        <begin position="273"/>
        <end position="277"/>
    </location>
</feature>
<feature type="helix" evidence="4">
    <location>
        <begin position="280"/>
        <end position="286"/>
    </location>
</feature>
<feature type="strand" evidence="4">
    <location>
        <begin position="294"/>
        <end position="303"/>
    </location>
</feature>
<feature type="turn" evidence="4">
    <location>
        <begin position="304"/>
        <end position="308"/>
    </location>
</feature>
<feature type="helix" evidence="4">
    <location>
        <begin position="311"/>
        <end position="325"/>
    </location>
</feature>
<feature type="helix" evidence="4">
    <location>
        <begin position="329"/>
        <end position="343"/>
    </location>
</feature>
<feature type="strand" evidence="4">
    <location>
        <begin position="346"/>
        <end position="348"/>
    </location>
</feature>
<feature type="strand" evidence="4">
    <location>
        <begin position="353"/>
        <end position="359"/>
    </location>
</feature>
<feature type="strand" evidence="4">
    <location>
        <begin position="361"/>
        <end position="364"/>
    </location>
</feature>
<feature type="strand" evidence="6">
    <location>
        <begin position="366"/>
        <end position="369"/>
    </location>
</feature>
<feature type="helix" evidence="4">
    <location>
        <begin position="374"/>
        <end position="379"/>
    </location>
</feature>
<feature type="strand" evidence="4">
    <location>
        <begin position="384"/>
        <end position="386"/>
    </location>
</feature>
<feature type="turn" evidence="4">
    <location>
        <begin position="393"/>
        <end position="395"/>
    </location>
</feature>
<feature type="helix" evidence="4">
    <location>
        <begin position="397"/>
        <end position="408"/>
    </location>
</feature>
<feature type="strand" evidence="4">
    <location>
        <begin position="410"/>
        <end position="412"/>
    </location>
</feature>
<feature type="strand" evidence="4">
    <location>
        <begin position="415"/>
        <end position="419"/>
    </location>
</feature>
<feature type="strand" evidence="4">
    <location>
        <begin position="421"/>
        <end position="432"/>
    </location>
</feature>
<feature type="helix" evidence="4">
    <location>
        <begin position="433"/>
        <end position="448"/>
    </location>
</feature>
<feature type="turn" evidence="4">
    <location>
        <begin position="449"/>
        <end position="451"/>
    </location>
</feature>
<feature type="helix" evidence="4">
    <location>
        <begin position="456"/>
        <end position="458"/>
    </location>
</feature>
<feature type="strand" evidence="4">
    <location>
        <begin position="460"/>
        <end position="476"/>
    </location>
</feature>
<feature type="strand" evidence="4">
    <location>
        <begin position="479"/>
        <end position="482"/>
    </location>
</feature>
<feature type="strand" evidence="7">
    <location>
        <begin position="483"/>
        <end position="486"/>
    </location>
</feature>
<feature type="helix" evidence="9">
    <location>
        <begin position="487"/>
        <end position="490"/>
    </location>
</feature>
<feature type="helix" evidence="4">
    <location>
        <begin position="497"/>
        <end position="513"/>
    </location>
</feature>
<feature type="strand" evidence="7">
    <location>
        <begin position="515"/>
        <end position="517"/>
    </location>
</feature>
<feature type="helix" evidence="4">
    <location>
        <begin position="519"/>
        <end position="536"/>
    </location>
</feature>
<feature type="strand" evidence="4">
    <location>
        <begin position="540"/>
        <end position="542"/>
    </location>
</feature>
<feature type="helix" evidence="4">
    <location>
        <begin position="544"/>
        <end position="551"/>
    </location>
</feature>
<feature type="helix" evidence="4">
    <location>
        <begin position="559"/>
        <end position="561"/>
    </location>
</feature>
<feature type="turn" evidence="4">
    <location>
        <begin position="570"/>
        <end position="573"/>
    </location>
</feature>
<feature type="helix" evidence="4">
    <location>
        <begin position="576"/>
        <end position="582"/>
    </location>
</feature>
<feature type="helix" evidence="4">
    <location>
        <begin position="588"/>
        <end position="594"/>
    </location>
</feature>
<feature type="turn" evidence="4">
    <location>
        <begin position="600"/>
        <end position="602"/>
    </location>
</feature>
<feature type="strand" evidence="9">
    <location>
        <begin position="608"/>
        <end position="611"/>
    </location>
</feature>
<feature type="strand" evidence="7">
    <location>
        <begin position="615"/>
        <end position="617"/>
    </location>
</feature>
<feature type="strand" evidence="9">
    <location>
        <begin position="619"/>
        <end position="622"/>
    </location>
</feature>
<feature type="turn" evidence="6">
    <location>
        <begin position="639"/>
        <end position="642"/>
    </location>
</feature>
<feature type="turn" evidence="8">
    <location>
        <begin position="646"/>
        <end position="648"/>
    </location>
</feature>
<feature type="helix" evidence="8">
    <location>
        <begin position="649"/>
        <end position="661"/>
    </location>
</feature>
<feature type="turn" evidence="8">
    <location>
        <begin position="662"/>
        <end position="664"/>
    </location>
</feature>
<feature type="helix" evidence="8">
    <location>
        <begin position="667"/>
        <end position="670"/>
    </location>
</feature>
<feature type="strand" evidence="8">
    <location>
        <begin position="677"/>
        <end position="679"/>
    </location>
</feature>
<feature type="helix" evidence="8">
    <location>
        <begin position="680"/>
        <end position="693"/>
    </location>
</feature>
<feature type="strand" evidence="5">
    <location>
        <begin position="695"/>
        <end position="697"/>
    </location>
</feature>
<feature type="helix" evidence="8">
    <location>
        <begin position="699"/>
        <end position="707"/>
    </location>
</feature>
<dbReference type="EC" id="2.7.7.48"/>
<dbReference type="EMBL" id="AF004985">
    <property type="protein sequence ID" value="AAC25959.1"/>
    <property type="molecule type" value="mRNA"/>
</dbReference>
<dbReference type="RefSeq" id="YP_145794.1">
    <property type="nucleotide sequence ID" value="NC_006495.1"/>
</dbReference>
<dbReference type="PDB" id="8P0B">
    <property type="method" value="EM"/>
    <property type="resolution" value="2.87 A"/>
    <property type="chains" value="B=1-710"/>
</dbReference>
<dbReference type="PDB" id="8P0G">
    <property type="method" value="EM"/>
    <property type="resolution" value="3.17 A"/>
    <property type="chains" value="B=1-710"/>
</dbReference>
<dbReference type="PDB" id="8P0U">
    <property type="method" value="EM"/>
    <property type="resolution" value="2.92 A"/>
    <property type="chains" value="B=1-710"/>
</dbReference>
<dbReference type="PDB" id="8Z85">
    <property type="method" value="EM"/>
    <property type="resolution" value="2.30 A"/>
    <property type="chains" value="B=1-710"/>
</dbReference>
<dbReference type="PDB" id="8Z8J">
    <property type="method" value="EM"/>
    <property type="resolution" value="3.16 A"/>
    <property type="chains" value="B=1-710"/>
</dbReference>
<dbReference type="PDB" id="8Z8N">
    <property type="method" value="EM"/>
    <property type="resolution" value="2.79 A"/>
    <property type="chains" value="B=1-710"/>
</dbReference>
<dbReference type="PDB" id="8Z8X">
    <property type="method" value="EM"/>
    <property type="resolution" value="3.06 A"/>
    <property type="chains" value="B=1-710"/>
</dbReference>
<dbReference type="PDB" id="8Z90">
    <property type="method" value="EM"/>
    <property type="resolution" value="2.87 A"/>
    <property type="chains" value="B=1-710"/>
</dbReference>
<dbReference type="PDB" id="8Z97">
    <property type="method" value="EM"/>
    <property type="resolution" value="2.65 A"/>
    <property type="chains" value="B=1-710"/>
</dbReference>
<dbReference type="PDB" id="8Z98">
    <property type="method" value="EM"/>
    <property type="resolution" value="2.52 A"/>
    <property type="chains" value="B=1-710"/>
</dbReference>
<dbReference type="PDB" id="8Z9H">
    <property type="method" value="EM"/>
    <property type="resolution" value="2.70 A"/>
    <property type="chains" value="B/I=1-710"/>
</dbReference>
<dbReference type="PDB" id="8Z9Q">
    <property type="method" value="EM"/>
    <property type="resolution" value="2.33 A"/>
    <property type="chains" value="B=1-710"/>
</dbReference>
<dbReference type="PDB" id="8Z9R">
    <property type="method" value="EM"/>
    <property type="resolution" value="2.58 A"/>
    <property type="chains" value="B/I=1-710"/>
</dbReference>
<dbReference type="PDBsum" id="8P0B"/>
<dbReference type="PDBsum" id="8P0G"/>
<dbReference type="PDBsum" id="8P0U"/>
<dbReference type="PDBsum" id="8Z85"/>
<dbReference type="PDBsum" id="8Z8J"/>
<dbReference type="PDBsum" id="8Z8N"/>
<dbReference type="PDBsum" id="8Z8X"/>
<dbReference type="PDBsum" id="8Z90"/>
<dbReference type="PDBsum" id="8Z97"/>
<dbReference type="PDBsum" id="8Z98"/>
<dbReference type="PDBsum" id="8Z9H"/>
<dbReference type="PDBsum" id="8Z9Q"/>
<dbReference type="PDBsum" id="8Z9R"/>
<dbReference type="EMDB" id="EMD-17332"/>
<dbReference type="EMDB" id="EMD-17333"/>
<dbReference type="EMDB" id="EMD-17338"/>
<dbReference type="EMDB" id="EMD-39838"/>
<dbReference type="EMDB" id="EMD-39848"/>
<dbReference type="EMDB" id="EMD-39849"/>
<dbReference type="EMDB" id="EMD-39850"/>
<dbReference type="EMDB" id="EMD-39852"/>
<dbReference type="EMDB" id="EMD-39855"/>
<dbReference type="EMDB" id="EMD-39856"/>
<dbReference type="EMDB" id="EMD-39862"/>
<dbReference type="EMDB" id="EMD-39867"/>
<dbReference type="EMDB" id="EMD-39868"/>
<dbReference type="SMR" id="O41353"/>
<dbReference type="KEGG" id="vg:5075733"/>
<dbReference type="Proteomes" id="UP000008973">
    <property type="component" value="Genome"/>
</dbReference>
<dbReference type="GO" id="GO:0000166">
    <property type="term" value="F:nucleotide binding"/>
    <property type="evidence" value="ECO:0007669"/>
    <property type="project" value="UniProtKB-KW"/>
</dbReference>
<dbReference type="GO" id="GO:0003723">
    <property type="term" value="F:RNA binding"/>
    <property type="evidence" value="ECO:0007669"/>
    <property type="project" value="InterPro"/>
</dbReference>
<dbReference type="GO" id="GO:0003968">
    <property type="term" value="F:RNA-directed RNA polymerase activity"/>
    <property type="evidence" value="ECO:0007669"/>
    <property type="project" value="UniProtKB-KW"/>
</dbReference>
<dbReference type="GO" id="GO:0039694">
    <property type="term" value="P:viral RNA genome replication"/>
    <property type="evidence" value="ECO:0007669"/>
    <property type="project" value="InterPro"/>
</dbReference>
<dbReference type="InterPro" id="IPR043502">
    <property type="entry name" value="DNA/RNA_pol_sf"/>
</dbReference>
<dbReference type="InterPro" id="IPR007099">
    <property type="entry name" value="RNA-dir_pol_NSvirus"/>
</dbReference>
<dbReference type="InterPro" id="IPR001407">
    <property type="entry name" value="RNA_pol_PB1_influenza"/>
</dbReference>
<dbReference type="Pfam" id="PF00602">
    <property type="entry name" value="Flu_PB1"/>
    <property type="match status" value="1"/>
</dbReference>
<dbReference type="PIRSF" id="PIRSF000827">
    <property type="entry name" value="RdRPol_OMV"/>
    <property type="match status" value="1"/>
</dbReference>
<dbReference type="SUPFAM" id="SSF56672">
    <property type="entry name" value="DNA/RNA polymerases"/>
    <property type="match status" value="1"/>
</dbReference>
<dbReference type="PROSITE" id="PS50525">
    <property type="entry name" value="RDRP_SSRNA_NEG_SEG"/>
    <property type="match status" value="1"/>
</dbReference>
<organism>
    <name type="scientific">Thogoto virus (isolate SiAr 126)</name>
    <name type="common">Tho</name>
    <dbReference type="NCBI Taxonomy" id="126796"/>
    <lineage>
        <taxon>Viruses</taxon>
        <taxon>Riboviria</taxon>
        <taxon>Orthornavirae</taxon>
        <taxon>Negarnaviricota</taxon>
        <taxon>Polyploviricotina</taxon>
        <taxon>Insthoviricetes</taxon>
        <taxon>Articulavirales</taxon>
        <taxon>Orthomyxoviridae</taxon>
        <taxon>Thogotovirus</taxon>
        <taxon>Thogotovirus thogotoense</taxon>
    </lineage>
</organism>
<reference key="1">
    <citation type="journal article" date="1997" name="Virus Res.">
        <title>The fourth genus in the Orthomyxoviridae: sequence analyses of two Thogoto virus polymerase proteins and comparison with influenza viruses.</title>
        <authorList>
            <person name="Leahy M.B."/>
            <person name="Dessens J.T."/>
            <person name="Weber F."/>
            <person name="Kochs G."/>
            <person name="Nuttall P.A."/>
        </authorList>
    </citation>
    <scope>NUCLEOTIDE SEQUENCE [MRNA]</scope>
</reference>